<sequence length="95" mass="10763">MKICGPKLSLCGLIISVWGIVQLVLMGLFFYINSVALIEDLPLEEEYHSLEDFYAAANRAYNQNAYNCWIAACIYVLTLLLSAQQFYMNSRVTAN</sequence>
<protein>
    <recommendedName>
        <fullName evidence="4 6">Ribonuclease kappa</fullName>
        <shortName>RNase K</shortName>
        <shortName>RNase kappa</shortName>
        <ecNumber>3.1.-.-</ecNumber>
    </recommendedName>
</protein>
<comment type="function">
    <text evidence="1">Endoribonuclease.</text>
</comment>
<comment type="function">
    <text evidence="3">(Microbial infection) Required for the initial stages of clathrin-mediated endocytic uptake of a diverse set of flaviviruses, including dengue and West Nile (PubMed:26056282). Not required for clathrin-mediated endocytosis and macropinocytosis (PubMed:26056282).</text>
</comment>
<comment type="subcellular location">
    <subcellularLocation>
        <location evidence="5">Membrane</location>
        <topology evidence="5">Multi-pass membrane protein</topology>
    </subcellularLocation>
</comment>
<comment type="similarity">
    <text evidence="5">Belongs to the RNase K family.</text>
</comment>
<keyword id="KW-0255">Endonuclease</keyword>
<keyword id="KW-0378">Hydrolase</keyword>
<keyword id="KW-0472">Membrane</keyword>
<keyword id="KW-0540">Nuclease</keyword>
<keyword id="KW-1185">Reference proteome</keyword>
<keyword id="KW-0812">Transmembrane</keyword>
<keyword id="KW-1133">Transmembrane helix</keyword>
<organism>
    <name type="scientific">Drosophila melanogaster</name>
    <name type="common">Fruit fly</name>
    <dbReference type="NCBI Taxonomy" id="7227"/>
    <lineage>
        <taxon>Eukaryota</taxon>
        <taxon>Metazoa</taxon>
        <taxon>Ecdysozoa</taxon>
        <taxon>Arthropoda</taxon>
        <taxon>Hexapoda</taxon>
        <taxon>Insecta</taxon>
        <taxon>Pterygota</taxon>
        <taxon>Neoptera</taxon>
        <taxon>Endopterygota</taxon>
        <taxon>Diptera</taxon>
        <taxon>Brachycera</taxon>
        <taxon>Muscomorpha</taxon>
        <taxon>Ephydroidea</taxon>
        <taxon>Drosophilidae</taxon>
        <taxon>Drosophila</taxon>
        <taxon>Sophophora</taxon>
    </lineage>
</organism>
<name>RNK_DROME</name>
<reference key="1">
    <citation type="journal article" date="2000" name="Science">
        <title>The genome sequence of Drosophila melanogaster.</title>
        <authorList>
            <person name="Adams M.D."/>
            <person name="Celniker S.E."/>
            <person name="Holt R.A."/>
            <person name="Evans C.A."/>
            <person name="Gocayne J.D."/>
            <person name="Amanatides P.G."/>
            <person name="Scherer S.E."/>
            <person name="Li P.W."/>
            <person name="Hoskins R.A."/>
            <person name="Galle R.F."/>
            <person name="George R.A."/>
            <person name="Lewis S.E."/>
            <person name="Richards S."/>
            <person name="Ashburner M."/>
            <person name="Henderson S.N."/>
            <person name="Sutton G.G."/>
            <person name="Wortman J.R."/>
            <person name="Yandell M.D."/>
            <person name="Zhang Q."/>
            <person name="Chen L.X."/>
            <person name="Brandon R.C."/>
            <person name="Rogers Y.-H.C."/>
            <person name="Blazej R.G."/>
            <person name="Champe M."/>
            <person name="Pfeiffer B.D."/>
            <person name="Wan K.H."/>
            <person name="Doyle C."/>
            <person name="Baxter E.G."/>
            <person name="Helt G."/>
            <person name="Nelson C.R."/>
            <person name="Miklos G.L.G."/>
            <person name="Abril J.F."/>
            <person name="Agbayani A."/>
            <person name="An H.-J."/>
            <person name="Andrews-Pfannkoch C."/>
            <person name="Baldwin D."/>
            <person name="Ballew R.M."/>
            <person name="Basu A."/>
            <person name="Baxendale J."/>
            <person name="Bayraktaroglu L."/>
            <person name="Beasley E.M."/>
            <person name="Beeson K.Y."/>
            <person name="Benos P.V."/>
            <person name="Berman B.P."/>
            <person name="Bhandari D."/>
            <person name="Bolshakov S."/>
            <person name="Borkova D."/>
            <person name="Botchan M.R."/>
            <person name="Bouck J."/>
            <person name="Brokstein P."/>
            <person name="Brottier P."/>
            <person name="Burtis K.C."/>
            <person name="Busam D.A."/>
            <person name="Butler H."/>
            <person name="Cadieu E."/>
            <person name="Center A."/>
            <person name="Chandra I."/>
            <person name="Cherry J.M."/>
            <person name="Cawley S."/>
            <person name="Dahlke C."/>
            <person name="Davenport L.B."/>
            <person name="Davies P."/>
            <person name="de Pablos B."/>
            <person name="Delcher A."/>
            <person name="Deng Z."/>
            <person name="Mays A.D."/>
            <person name="Dew I."/>
            <person name="Dietz S.M."/>
            <person name="Dodson K."/>
            <person name="Doup L.E."/>
            <person name="Downes M."/>
            <person name="Dugan-Rocha S."/>
            <person name="Dunkov B.C."/>
            <person name="Dunn P."/>
            <person name="Durbin K.J."/>
            <person name="Evangelista C.C."/>
            <person name="Ferraz C."/>
            <person name="Ferriera S."/>
            <person name="Fleischmann W."/>
            <person name="Fosler C."/>
            <person name="Gabrielian A.E."/>
            <person name="Garg N.S."/>
            <person name="Gelbart W.M."/>
            <person name="Glasser K."/>
            <person name="Glodek A."/>
            <person name="Gong F."/>
            <person name="Gorrell J.H."/>
            <person name="Gu Z."/>
            <person name="Guan P."/>
            <person name="Harris M."/>
            <person name="Harris N.L."/>
            <person name="Harvey D.A."/>
            <person name="Heiman T.J."/>
            <person name="Hernandez J.R."/>
            <person name="Houck J."/>
            <person name="Hostin D."/>
            <person name="Houston K.A."/>
            <person name="Howland T.J."/>
            <person name="Wei M.-H."/>
            <person name="Ibegwam C."/>
            <person name="Jalali M."/>
            <person name="Kalush F."/>
            <person name="Karpen G.H."/>
            <person name="Ke Z."/>
            <person name="Kennison J.A."/>
            <person name="Ketchum K.A."/>
            <person name="Kimmel B.E."/>
            <person name="Kodira C.D."/>
            <person name="Kraft C.L."/>
            <person name="Kravitz S."/>
            <person name="Kulp D."/>
            <person name="Lai Z."/>
            <person name="Lasko P."/>
            <person name="Lei Y."/>
            <person name="Levitsky A.A."/>
            <person name="Li J.H."/>
            <person name="Li Z."/>
            <person name="Liang Y."/>
            <person name="Lin X."/>
            <person name="Liu X."/>
            <person name="Mattei B."/>
            <person name="McIntosh T.C."/>
            <person name="McLeod M.P."/>
            <person name="McPherson D."/>
            <person name="Merkulov G."/>
            <person name="Milshina N.V."/>
            <person name="Mobarry C."/>
            <person name="Morris J."/>
            <person name="Moshrefi A."/>
            <person name="Mount S.M."/>
            <person name="Moy M."/>
            <person name="Murphy B."/>
            <person name="Murphy L."/>
            <person name="Muzny D.M."/>
            <person name="Nelson D.L."/>
            <person name="Nelson D.R."/>
            <person name="Nelson K.A."/>
            <person name="Nixon K."/>
            <person name="Nusskern D.R."/>
            <person name="Pacleb J.M."/>
            <person name="Palazzolo M."/>
            <person name="Pittman G.S."/>
            <person name="Pan S."/>
            <person name="Pollard J."/>
            <person name="Puri V."/>
            <person name="Reese M.G."/>
            <person name="Reinert K."/>
            <person name="Remington K."/>
            <person name="Saunders R.D.C."/>
            <person name="Scheeler F."/>
            <person name="Shen H."/>
            <person name="Shue B.C."/>
            <person name="Siden-Kiamos I."/>
            <person name="Simpson M."/>
            <person name="Skupski M.P."/>
            <person name="Smith T.J."/>
            <person name="Spier E."/>
            <person name="Spradling A.C."/>
            <person name="Stapleton M."/>
            <person name="Strong R."/>
            <person name="Sun E."/>
            <person name="Svirskas R."/>
            <person name="Tector C."/>
            <person name="Turner R."/>
            <person name="Venter E."/>
            <person name="Wang A.H."/>
            <person name="Wang X."/>
            <person name="Wang Z.-Y."/>
            <person name="Wassarman D.A."/>
            <person name="Weinstock G.M."/>
            <person name="Weissenbach J."/>
            <person name="Williams S.M."/>
            <person name="Woodage T."/>
            <person name="Worley K.C."/>
            <person name="Wu D."/>
            <person name="Yang S."/>
            <person name="Yao Q.A."/>
            <person name="Ye J."/>
            <person name="Yeh R.-F."/>
            <person name="Zaveri J.S."/>
            <person name="Zhan M."/>
            <person name="Zhang G."/>
            <person name="Zhao Q."/>
            <person name="Zheng L."/>
            <person name="Zheng X.H."/>
            <person name="Zhong F.N."/>
            <person name="Zhong W."/>
            <person name="Zhou X."/>
            <person name="Zhu S.C."/>
            <person name="Zhu X."/>
            <person name="Smith H.O."/>
            <person name="Gibbs R.A."/>
            <person name="Myers E.W."/>
            <person name="Rubin G.M."/>
            <person name="Venter J.C."/>
        </authorList>
    </citation>
    <scope>NUCLEOTIDE SEQUENCE [LARGE SCALE GENOMIC DNA]</scope>
    <source>
        <strain>Berkeley</strain>
    </source>
</reference>
<reference key="2">
    <citation type="journal article" date="2002" name="Genome Biol.">
        <title>Annotation of the Drosophila melanogaster euchromatic genome: a systematic review.</title>
        <authorList>
            <person name="Misra S."/>
            <person name="Crosby M.A."/>
            <person name="Mungall C.J."/>
            <person name="Matthews B.B."/>
            <person name="Campbell K.S."/>
            <person name="Hradecky P."/>
            <person name="Huang Y."/>
            <person name="Kaminker J.S."/>
            <person name="Millburn G.H."/>
            <person name="Prochnik S.E."/>
            <person name="Smith C.D."/>
            <person name="Tupy J.L."/>
            <person name="Whitfield E.J."/>
            <person name="Bayraktaroglu L."/>
            <person name="Berman B.P."/>
            <person name="Bettencourt B.R."/>
            <person name="Celniker S.E."/>
            <person name="de Grey A.D.N.J."/>
            <person name="Drysdale R.A."/>
            <person name="Harris N.L."/>
            <person name="Richter J."/>
            <person name="Russo S."/>
            <person name="Schroeder A.J."/>
            <person name="Shu S.Q."/>
            <person name="Stapleton M."/>
            <person name="Yamada C."/>
            <person name="Ashburner M."/>
            <person name="Gelbart W.M."/>
            <person name="Rubin G.M."/>
            <person name="Lewis S.E."/>
        </authorList>
    </citation>
    <scope>GENOME REANNOTATION</scope>
    <source>
        <strain>Berkeley</strain>
    </source>
</reference>
<reference key="3">
    <citation type="journal article" date="2002" name="Genome Biol.">
        <title>A Drosophila full-length cDNA resource.</title>
        <authorList>
            <person name="Stapleton M."/>
            <person name="Carlson J.W."/>
            <person name="Brokstein P."/>
            <person name="Yu C."/>
            <person name="Champe M."/>
            <person name="George R.A."/>
            <person name="Guarin H."/>
            <person name="Kronmiller B."/>
            <person name="Pacleb J.M."/>
            <person name="Park S."/>
            <person name="Wan K.H."/>
            <person name="Rubin G.M."/>
            <person name="Celniker S.E."/>
        </authorList>
    </citation>
    <scope>NUCLEOTIDE SEQUENCE [LARGE SCALE MRNA]</scope>
    <source>
        <strain>Berkeley</strain>
        <tissue>Ovary</tissue>
    </source>
</reference>
<reference key="4">
    <citation type="journal article" date="2015" name="Proc. Natl. Acad. Sci. U.S.A.">
        <title>RNASEK is required for internalization of diverse acid-dependent viruses.</title>
        <authorList>
            <person name="Hackett B.A."/>
            <person name="Yasunaga A."/>
            <person name="Panda D."/>
            <person name="Tartell M.A."/>
            <person name="Hopkins K.C."/>
            <person name="Hensley S.E."/>
            <person name="Cherry S."/>
        </authorList>
    </citation>
    <scope>FUNCTION (MICROBIAL INFECTION)</scope>
</reference>
<evidence type="ECO:0000250" key="1">
    <source>
        <dbReference type="UniProtKB" id="Q7Z0Q2"/>
    </source>
</evidence>
<evidence type="ECO:0000255" key="2"/>
<evidence type="ECO:0000269" key="3">
    <source>
    </source>
</evidence>
<evidence type="ECO:0000303" key="4">
    <source>
    </source>
</evidence>
<evidence type="ECO:0000305" key="5"/>
<evidence type="ECO:0000312" key="6">
    <source>
        <dbReference type="FlyBase" id="FBgn0262116"/>
    </source>
</evidence>
<proteinExistence type="inferred from homology"/>
<feature type="chain" id="PRO_0000344228" description="Ribonuclease kappa">
    <location>
        <begin position="1"/>
        <end position="95"/>
    </location>
</feature>
<feature type="transmembrane region" description="Helical" evidence="2">
    <location>
        <begin position="12"/>
        <end position="32"/>
    </location>
</feature>
<feature type="transmembrane region" description="Helical" evidence="2">
    <location>
        <begin position="68"/>
        <end position="88"/>
    </location>
</feature>
<dbReference type="EC" id="3.1.-.-"/>
<dbReference type="EMBL" id="AE013599">
    <property type="protein sequence ID" value="EAA46159.1"/>
    <property type="molecule type" value="Genomic_DNA"/>
</dbReference>
<dbReference type="EMBL" id="AY118852">
    <property type="protein sequence ID" value="AAM50712.1"/>
    <property type="molecule type" value="mRNA"/>
</dbReference>
<dbReference type="RefSeq" id="NP_001036433.1">
    <property type="nucleotide sequence ID" value="NM_001042968.2"/>
</dbReference>
<dbReference type="RefSeq" id="NP_001260699.1">
    <property type="nucleotide sequence ID" value="NM_001273770.2"/>
</dbReference>
<dbReference type="SMR" id="Q8MSF5"/>
<dbReference type="BioGRID" id="78141">
    <property type="interactions" value="65"/>
</dbReference>
<dbReference type="DIP" id="DIP-18216N"/>
<dbReference type="FunCoup" id="Q8MSF5">
    <property type="interactions" value="531"/>
</dbReference>
<dbReference type="IntAct" id="Q8MSF5">
    <property type="interactions" value="34"/>
</dbReference>
<dbReference type="STRING" id="7227.FBpp0306999"/>
<dbReference type="PaxDb" id="7227-FBpp0110588"/>
<dbReference type="DNASU" id="3355016"/>
<dbReference type="EnsemblMetazoa" id="FBtr0111266">
    <property type="protein sequence ID" value="FBpp0110588"/>
    <property type="gene ID" value="FBgn0262116"/>
</dbReference>
<dbReference type="EnsemblMetazoa" id="FBtr0334986">
    <property type="protein sequence ID" value="FBpp0306999"/>
    <property type="gene ID" value="FBgn0262116"/>
</dbReference>
<dbReference type="GeneID" id="3355016"/>
<dbReference type="KEGG" id="dme:Dmel_CG40127"/>
<dbReference type="UCSC" id="CG40127-RA">
    <property type="organism name" value="d. melanogaster"/>
</dbReference>
<dbReference type="AGR" id="FB:FBgn0262116"/>
<dbReference type="CTD" id="440400"/>
<dbReference type="FlyBase" id="FBgn0262116">
    <property type="gene designation" value="RNASEK"/>
</dbReference>
<dbReference type="VEuPathDB" id="VectorBase:FBgn0262116"/>
<dbReference type="eggNOG" id="ENOG502S351">
    <property type="taxonomic scope" value="Eukaryota"/>
</dbReference>
<dbReference type="GeneTree" id="ENSGT00940000172351"/>
<dbReference type="HOGENOM" id="CLU_140554_2_1_1"/>
<dbReference type="InParanoid" id="Q8MSF5"/>
<dbReference type="OMA" id="ATQCWVA"/>
<dbReference type="OrthoDB" id="67317at2759"/>
<dbReference type="PhylomeDB" id="Q8MSF5"/>
<dbReference type="BioGRID-ORCS" id="3355016">
    <property type="hits" value="1 hit in 1 CRISPR screen"/>
</dbReference>
<dbReference type="ChiTaRS" id="RNASEK">
    <property type="organism name" value="fly"/>
</dbReference>
<dbReference type="GenomeRNAi" id="3355016"/>
<dbReference type="PRO" id="PR:Q8MSF5"/>
<dbReference type="Proteomes" id="UP000000803">
    <property type="component" value="Chromosome 2R"/>
</dbReference>
<dbReference type="Bgee" id="FBgn0262116">
    <property type="expression patterns" value="Expressed in adult posterior midgut class II enteroendocrine cell in adult midgut (Drosophila) and 266 other cell types or tissues"/>
</dbReference>
<dbReference type="ExpressionAtlas" id="Q8MSF5">
    <property type="expression patterns" value="baseline and differential"/>
</dbReference>
<dbReference type="GO" id="GO:0016020">
    <property type="term" value="C:membrane"/>
    <property type="evidence" value="ECO:0007669"/>
    <property type="project" value="UniProtKB-SubCell"/>
</dbReference>
<dbReference type="GO" id="GO:0004521">
    <property type="term" value="F:RNA endonuclease activity"/>
    <property type="evidence" value="ECO:0000250"/>
    <property type="project" value="UniProtKB"/>
</dbReference>
<dbReference type="GO" id="GO:0098586">
    <property type="term" value="P:cellular response to virus"/>
    <property type="evidence" value="ECO:0000315"/>
    <property type="project" value="FlyBase"/>
</dbReference>
<dbReference type="InterPro" id="IPR026770">
    <property type="entry name" value="RNase_K"/>
</dbReference>
<dbReference type="PANTHER" id="PTHR31733">
    <property type="entry name" value="RIBONUCLEASE KAPPA"/>
    <property type="match status" value="1"/>
</dbReference>
<accession>Q8MSF5</accession>
<gene>
    <name evidence="4 6" type="primary">RNASEK</name>
    <name evidence="6" type="synonym">l(2)NC110</name>
    <name evidence="6" type="ORF">CG40127</name>
</gene>